<organism>
    <name type="scientific">Salmonella enteritidis PT4 (strain P125109)</name>
    <dbReference type="NCBI Taxonomy" id="550537"/>
    <lineage>
        <taxon>Bacteria</taxon>
        <taxon>Pseudomonadati</taxon>
        <taxon>Pseudomonadota</taxon>
        <taxon>Gammaproteobacteria</taxon>
        <taxon>Enterobacterales</taxon>
        <taxon>Enterobacteriaceae</taxon>
        <taxon>Salmonella</taxon>
    </lineage>
</organism>
<sequence>MENIMTLPKIKHVRAWFIGGATAEKGAGGGDYHDQGGNHWIDDHIATPMSKYRDYEQSRQSFGINVLGTLIVEVEAENGQTGFAVSTAGEMGCFIVEKHLNRFIEGKCVSDIKLIHDQMLGATMYYSGSGGLVMNTISCVDLALWDLFGKVVGLPVYKLLGGAVRDEIQFYATGARPDLAKEMGFIGGKMPTHWGPHDGDAGIRKDAAMVADMREKCGPDFWLMLDCWMSQDVNYATKLAHACAPFNLKWIEECLPPQQYEGYRELKRNAPAGMMVTSGEHHGTLQSFRTLAETGIDIMQPDVGWCGGLTTLVEIAALAKSRGQLVVPHGSSVYSHHAVITFTNTPFSEFLMTSPDCSTLRPQFDPILLDEPVPVNGRIHKSVLDKPGFGVELNRDCHLKRPYSH</sequence>
<feature type="chain" id="PRO_1000140375" description="L-rhamnonate dehydratase">
    <location>
        <begin position="1"/>
        <end position="405"/>
    </location>
</feature>
<feature type="active site" description="Proton acceptor" evidence="1">
    <location>
        <position position="329"/>
    </location>
</feature>
<feature type="binding site" evidence="1">
    <location>
        <position position="33"/>
    </location>
    <ligand>
        <name>substrate</name>
    </ligand>
</feature>
<feature type="binding site" evidence="1">
    <location>
        <position position="59"/>
    </location>
    <ligand>
        <name>substrate</name>
    </ligand>
</feature>
<feature type="binding site" evidence="1">
    <location>
        <position position="226"/>
    </location>
    <ligand>
        <name>Mg(2+)</name>
        <dbReference type="ChEBI" id="CHEBI:18420"/>
    </ligand>
</feature>
<feature type="binding site" evidence="1">
    <location>
        <position position="252"/>
    </location>
    <ligand>
        <name>Mg(2+)</name>
        <dbReference type="ChEBI" id="CHEBI:18420"/>
    </ligand>
</feature>
<feature type="binding site" evidence="1">
    <location>
        <position position="280"/>
    </location>
    <ligand>
        <name>Mg(2+)</name>
        <dbReference type="ChEBI" id="CHEBI:18420"/>
    </ligand>
</feature>
<feature type="binding site" evidence="1">
    <location>
        <position position="349"/>
    </location>
    <ligand>
        <name>substrate</name>
    </ligand>
</feature>
<feature type="site" description="Increases basicity of active site His" evidence="1">
    <location>
        <position position="302"/>
    </location>
</feature>
<feature type="site" description="Transition state stabilizer" evidence="1">
    <location>
        <position position="349"/>
    </location>
</feature>
<proteinExistence type="inferred from homology"/>
<accession>B5R264</accession>
<evidence type="ECO:0000255" key="1">
    <source>
        <dbReference type="HAMAP-Rule" id="MF_01288"/>
    </source>
</evidence>
<protein>
    <recommendedName>
        <fullName evidence="1">L-rhamnonate dehydratase</fullName>
        <shortName evidence="1">RhamD</shortName>
        <ecNumber evidence="1">4.2.1.90</ecNumber>
    </recommendedName>
</protein>
<dbReference type="EC" id="4.2.1.90" evidence="1"/>
<dbReference type="EMBL" id="AM933172">
    <property type="protein sequence ID" value="CAR33857.1"/>
    <property type="molecule type" value="Genomic_DNA"/>
</dbReference>
<dbReference type="SMR" id="B5R264"/>
<dbReference type="KEGG" id="set:SEN2273"/>
<dbReference type="HOGENOM" id="CLU_030273_1_0_6"/>
<dbReference type="Proteomes" id="UP000000613">
    <property type="component" value="Chromosome"/>
</dbReference>
<dbReference type="GO" id="GO:0050032">
    <property type="term" value="F:L-rhamnonate dehydratase activity"/>
    <property type="evidence" value="ECO:0007669"/>
    <property type="project" value="UniProtKB-UniRule"/>
</dbReference>
<dbReference type="GO" id="GO:0000287">
    <property type="term" value="F:magnesium ion binding"/>
    <property type="evidence" value="ECO:0007669"/>
    <property type="project" value="UniProtKB-UniRule"/>
</dbReference>
<dbReference type="GO" id="GO:0009063">
    <property type="term" value="P:amino acid catabolic process"/>
    <property type="evidence" value="ECO:0007669"/>
    <property type="project" value="InterPro"/>
</dbReference>
<dbReference type="GO" id="GO:0016052">
    <property type="term" value="P:carbohydrate catabolic process"/>
    <property type="evidence" value="ECO:0007669"/>
    <property type="project" value="TreeGrafter"/>
</dbReference>
<dbReference type="CDD" id="cd03327">
    <property type="entry name" value="MR_like_2"/>
    <property type="match status" value="1"/>
</dbReference>
<dbReference type="FunFam" id="3.30.390.10:FF:000007">
    <property type="entry name" value="L-rhamnonate dehydratase"/>
    <property type="match status" value="1"/>
</dbReference>
<dbReference type="FunFam" id="3.20.20.120:FF:000005">
    <property type="entry name" value="Putative L-rhamnonate dehydratase"/>
    <property type="match status" value="1"/>
</dbReference>
<dbReference type="Gene3D" id="3.20.20.120">
    <property type="entry name" value="Enolase-like C-terminal domain"/>
    <property type="match status" value="1"/>
</dbReference>
<dbReference type="Gene3D" id="3.30.390.10">
    <property type="entry name" value="Enolase-like, N-terminal domain"/>
    <property type="match status" value="1"/>
</dbReference>
<dbReference type="HAMAP" id="MF_01288">
    <property type="entry name" value="Rhamnon_dehydrat"/>
    <property type="match status" value="1"/>
</dbReference>
<dbReference type="InterPro" id="IPR036849">
    <property type="entry name" value="Enolase-like_C_sf"/>
</dbReference>
<dbReference type="InterPro" id="IPR029017">
    <property type="entry name" value="Enolase-like_N"/>
</dbReference>
<dbReference type="InterPro" id="IPR029065">
    <property type="entry name" value="Enolase_C-like"/>
</dbReference>
<dbReference type="InterPro" id="IPR023444">
    <property type="entry name" value="L-Rhamnon_dehydrat"/>
</dbReference>
<dbReference type="InterPro" id="IPR018110">
    <property type="entry name" value="Mandel_Rmase/mucon_lact_enz_CS"/>
</dbReference>
<dbReference type="InterPro" id="IPR013342">
    <property type="entry name" value="Mandelate_racemase_C"/>
</dbReference>
<dbReference type="InterPro" id="IPR013341">
    <property type="entry name" value="Mandelate_racemase_N_dom"/>
</dbReference>
<dbReference type="InterPro" id="IPR046945">
    <property type="entry name" value="RHMD-like"/>
</dbReference>
<dbReference type="NCBIfam" id="NF011968">
    <property type="entry name" value="PRK15440.1"/>
    <property type="match status" value="1"/>
</dbReference>
<dbReference type="PANTHER" id="PTHR13794">
    <property type="entry name" value="ENOLASE SUPERFAMILY, MANDELATE RACEMASE"/>
    <property type="match status" value="1"/>
</dbReference>
<dbReference type="PANTHER" id="PTHR13794:SF58">
    <property type="entry name" value="MITOCHONDRIAL ENOLASE SUPERFAMILY MEMBER 1"/>
    <property type="match status" value="1"/>
</dbReference>
<dbReference type="Pfam" id="PF13378">
    <property type="entry name" value="MR_MLE_C"/>
    <property type="match status" value="1"/>
</dbReference>
<dbReference type="Pfam" id="PF02746">
    <property type="entry name" value="MR_MLE_N"/>
    <property type="match status" value="1"/>
</dbReference>
<dbReference type="SFLD" id="SFLDS00001">
    <property type="entry name" value="Enolase"/>
    <property type="match status" value="1"/>
</dbReference>
<dbReference type="SFLD" id="SFLDF00006">
    <property type="entry name" value="rhamnonate_dehydratase"/>
    <property type="match status" value="1"/>
</dbReference>
<dbReference type="SMART" id="SM00922">
    <property type="entry name" value="MR_MLE"/>
    <property type="match status" value="1"/>
</dbReference>
<dbReference type="SUPFAM" id="SSF51604">
    <property type="entry name" value="Enolase C-terminal domain-like"/>
    <property type="match status" value="1"/>
</dbReference>
<dbReference type="SUPFAM" id="SSF54826">
    <property type="entry name" value="Enolase N-terminal domain-like"/>
    <property type="match status" value="1"/>
</dbReference>
<dbReference type="PROSITE" id="PS00908">
    <property type="entry name" value="MR_MLE_1"/>
    <property type="match status" value="1"/>
</dbReference>
<name>RHMD_SALEP</name>
<keyword id="KW-0456">Lyase</keyword>
<keyword id="KW-0460">Magnesium</keyword>
<keyword id="KW-0479">Metal-binding</keyword>
<comment type="function">
    <text evidence="1">Catalyzes the dehydration of L-rhamnonate to 2-keto-3-deoxy-L-rhamnonate (KDR).</text>
</comment>
<comment type="catalytic activity">
    <reaction evidence="1">
        <text>L-rhamnonate = 2-dehydro-3-deoxy-L-rhamnonate + H2O</text>
        <dbReference type="Rhea" id="RHEA:23080"/>
        <dbReference type="ChEBI" id="CHEBI:15377"/>
        <dbReference type="ChEBI" id="CHEBI:58118"/>
        <dbReference type="ChEBI" id="CHEBI:58371"/>
        <dbReference type="EC" id="4.2.1.90"/>
    </reaction>
</comment>
<comment type="cofactor">
    <cofactor evidence="1">
        <name>Mg(2+)</name>
        <dbReference type="ChEBI" id="CHEBI:18420"/>
    </cofactor>
    <text evidence="1">Binds 1 Mg(2+) ion per subunit.</text>
</comment>
<comment type="subunit">
    <text evidence="1">Homooctamer; tetramer of dimers.</text>
</comment>
<comment type="miscellaneous">
    <text evidence="1">Reaction proceeds via a syn dehydration.</text>
</comment>
<comment type="similarity">
    <text evidence="1">Belongs to the mandelate racemase/muconate lactonizing enzyme family. RhamD subfamily.</text>
</comment>
<reference key="1">
    <citation type="journal article" date="2008" name="Genome Res.">
        <title>Comparative genome analysis of Salmonella enteritidis PT4 and Salmonella gallinarum 287/91 provides insights into evolutionary and host adaptation pathways.</title>
        <authorList>
            <person name="Thomson N.R."/>
            <person name="Clayton D.J."/>
            <person name="Windhorst D."/>
            <person name="Vernikos G."/>
            <person name="Davidson S."/>
            <person name="Churcher C."/>
            <person name="Quail M.A."/>
            <person name="Stevens M."/>
            <person name="Jones M.A."/>
            <person name="Watson M."/>
            <person name="Barron A."/>
            <person name="Layton A."/>
            <person name="Pickard D."/>
            <person name="Kingsley R.A."/>
            <person name="Bignell A."/>
            <person name="Clark L."/>
            <person name="Harris B."/>
            <person name="Ormond D."/>
            <person name="Abdellah Z."/>
            <person name="Brooks K."/>
            <person name="Cherevach I."/>
            <person name="Chillingworth T."/>
            <person name="Woodward J."/>
            <person name="Norberczak H."/>
            <person name="Lord A."/>
            <person name="Arrowsmith C."/>
            <person name="Jagels K."/>
            <person name="Moule S."/>
            <person name="Mungall K."/>
            <person name="Saunders M."/>
            <person name="Whitehead S."/>
            <person name="Chabalgoity J.A."/>
            <person name="Maskell D."/>
            <person name="Humphreys T."/>
            <person name="Roberts M."/>
            <person name="Barrow P.A."/>
            <person name="Dougan G."/>
            <person name="Parkhill J."/>
        </authorList>
    </citation>
    <scope>NUCLEOTIDE SEQUENCE [LARGE SCALE GENOMIC DNA]</scope>
    <source>
        <strain>P125109</strain>
    </source>
</reference>
<gene>
    <name evidence="1" type="primary">rhmD</name>
    <name type="ordered locus">SEN2273</name>
</gene>